<sequence length="252" mass="27836">MSLLTEVETYVLSIIPSGPLKAEIAQRLEDVFAGKNTDLEALMEWLKTRPILSPLTKGILGFVFTLTVPSERGLQRRRFVQNALNGNGDPNNMDRAVKLYKKLKREMTFHGAKEVALSYSTGALASCMGLIYNRMGTVTTEVALGLVCATCEQIADAQHRSHRQMATTTNPLIRHENRMVLASTTAKAMEQMAGSSEQAAEAMEVASQARQMVQAMRTIGTHPSSSAGLKDDLIENLQAYQKRMGVQMQRFK</sequence>
<proteinExistence type="inferred from homology"/>
<comment type="function">
    <text evidence="1">Plays critical roles in virus replication, from virus entry and uncoating to assembly and budding of the virus particle. M1 binding to ribonucleocapsids (RNPs) in nucleus seems to inhibit viral transcription. Interaction of viral NEP with M1-RNP is thought to promote nuclear export of the complex, which is targeted to the virion assembly site at the apical plasma membrane in polarized epithelial cells. Interactions with NA and HA may bring M1, a non-raft-associated protein, into lipid rafts. Forms a continuous shell on the inner side of the lipid bilayer in virion, where it binds the RNP. During virus entry into cell, the M2 ion channel acidifies the internal virion core, inducing M1 dissociation from the RNP. M1-free RNPs are transported to the nucleus, where viral transcription and replication can take place.</text>
</comment>
<comment type="function">
    <text evidence="1">Determines the virion's shape: spherical or filamentous. Clinical isolates of influenza are characterized by the presence of significant proportion of filamentous virions, whereas after multiple passage on eggs or cell culture, virions have only spherical morphology. Filamentous virions are thought to be important to infect neighboring cells, and spherical virions more suited to spread through aerosol between hosts organisms.</text>
</comment>
<comment type="subunit">
    <text evidence="1">Homodimer and homomultimer. Interacts with NEP. Binds ribonucleocapsid by both interacting with genomic RNA and NP protein. May interact with HA and NA. Cannot bind NP without genomic RNA.</text>
</comment>
<comment type="subcellular location">
    <subcellularLocation>
        <location evidence="1">Virion membrane</location>
        <topology evidence="1">Peripheral membrane protein</topology>
        <orientation evidence="1">Cytoplasmic side</orientation>
    </subcellularLocation>
    <subcellularLocation>
        <location evidence="1">Host nucleus</location>
    </subcellularLocation>
</comment>
<comment type="alternative products">
    <event type="alternative splicing"/>
    <isoform>
        <id>Q77Y95-1</id>
        <name>M1</name>
        <sequence type="displayed"/>
    </isoform>
    <isoform>
        <id>O70632-1</id>
        <name>M2</name>
        <sequence type="external"/>
    </isoform>
    <text>Only the first 9 residues are shared by the 2 isoforms.</text>
</comment>
<comment type="miscellaneous">
    <text evidence="1">Most abundant protein in virion. When expressed alone can form virus-like particles in transfected cells.</text>
</comment>
<comment type="similarity">
    <text evidence="1">Belongs to the influenza viruses Matrix protein M1 family.</text>
</comment>
<name>M1_I97A1</name>
<evidence type="ECO:0000255" key="1">
    <source>
        <dbReference type="HAMAP-Rule" id="MF_04068"/>
    </source>
</evidence>
<reference key="1">
    <citation type="journal article" date="1998" name="Science">
        <title>Characterization of an avian influenza A (H5N1) virus isolated from a child with a fatal respiratory illness.</title>
        <authorList>
            <person name="Subbarao K."/>
            <person name="Klimov A."/>
            <person name="Katz J."/>
            <person name="Regnery H."/>
            <person name="Lim W."/>
            <person name="Hall H."/>
            <person name="Perdue M."/>
            <person name="Swayne D."/>
            <person name="Bender C."/>
            <person name="Huang J."/>
            <person name="Hemphill M."/>
            <person name="Rowe T."/>
            <person name="Shaw M."/>
            <person name="Xu X."/>
            <person name="Fukuda K."/>
            <person name="Cox N."/>
        </authorList>
    </citation>
    <scope>NUCLEOTIDE SEQUENCE [GENOMIC RNA]</scope>
</reference>
<reference key="2">
    <citation type="journal article" date="1998" name="J. Virol.">
        <title>Comparisons of highly virulent H5N1 influenza A viruses isolated from humans and chickens from Hong Kong.</title>
        <authorList>
            <person name="Suarez D.L."/>
            <person name="Perdue M.L."/>
            <person name="Cox N."/>
            <person name="Rowe T."/>
            <person name="Bender C."/>
            <person name="Huang J."/>
            <person name="Swayne D.E."/>
        </authorList>
    </citation>
    <scope>NUCLEOTIDE SEQUENCE [GENOMIC RNA]</scope>
</reference>
<accession>Q77Y95</accession>
<accession>Q77XR6</accession>
<organism>
    <name type="scientific">Influenza A virus (strain A/Hong Kong/156/1997 H5N1 genotype Gs/Gd)</name>
    <dbReference type="NCBI Taxonomy" id="130763"/>
    <lineage>
        <taxon>Viruses</taxon>
        <taxon>Riboviria</taxon>
        <taxon>Orthornavirae</taxon>
        <taxon>Negarnaviricota</taxon>
        <taxon>Polyploviricotina</taxon>
        <taxon>Insthoviricetes</taxon>
        <taxon>Articulavirales</taxon>
        <taxon>Orthomyxoviridae</taxon>
        <taxon>Alphainfluenzavirus</taxon>
        <taxon>Alphainfluenzavirus influenzae</taxon>
        <taxon>Influenza A virus</taxon>
    </lineage>
</organism>
<protein>
    <recommendedName>
        <fullName evidence="1">Matrix protein 1</fullName>
        <shortName evidence="1">M1</shortName>
    </recommendedName>
</protein>
<dbReference type="EMBL" id="AF036358">
    <property type="protein sequence ID" value="AAC34265.1"/>
    <property type="molecule type" value="Genomic_RNA"/>
</dbReference>
<dbReference type="EMBL" id="AF046090">
    <property type="protein sequence ID" value="AAC32090.1"/>
    <property type="molecule type" value="Genomic_RNA"/>
</dbReference>
<dbReference type="SMR" id="Q77Y95"/>
<dbReference type="Proteomes" id="UP000008587">
    <property type="component" value="Genome"/>
</dbReference>
<dbReference type="GO" id="GO:0042025">
    <property type="term" value="C:host cell nucleus"/>
    <property type="evidence" value="ECO:0007669"/>
    <property type="project" value="UniProtKB-SubCell"/>
</dbReference>
<dbReference type="GO" id="GO:0016020">
    <property type="term" value="C:membrane"/>
    <property type="evidence" value="ECO:0007669"/>
    <property type="project" value="UniProtKB-KW"/>
</dbReference>
<dbReference type="GO" id="GO:0055036">
    <property type="term" value="C:virion membrane"/>
    <property type="evidence" value="ECO:0007669"/>
    <property type="project" value="UniProtKB-SubCell"/>
</dbReference>
<dbReference type="GO" id="GO:0003723">
    <property type="term" value="F:RNA binding"/>
    <property type="evidence" value="ECO:0007669"/>
    <property type="project" value="UniProtKB-UniRule"/>
</dbReference>
<dbReference type="GO" id="GO:0039660">
    <property type="term" value="F:structural constituent of virion"/>
    <property type="evidence" value="ECO:0007669"/>
    <property type="project" value="UniProtKB-UniRule"/>
</dbReference>
<dbReference type="GO" id="GO:0046761">
    <property type="term" value="P:viral budding from plasma membrane"/>
    <property type="evidence" value="ECO:0007669"/>
    <property type="project" value="UniProtKB-UniRule"/>
</dbReference>
<dbReference type="FunFam" id="1.10.10.180:FF:000001">
    <property type="entry name" value="Matrix protein 1"/>
    <property type="match status" value="1"/>
</dbReference>
<dbReference type="FunFam" id="1.20.91.10:FF:000001">
    <property type="entry name" value="Matrix protein 1"/>
    <property type="match status" value="1"/>
</dbReference>
<dbReference type="Gene3D" id="1.10.10.180">
    <property type="match status" value="1"/>
</dbReference>
<dbReference type="Gene3D" id="1.20.91.10">
    <property type="match status" value="1"/>
</dbReference>
<dbReference type="HAMAP" id="MF_04068">
    <property type="entry name" value="INFV_M1"/>
    <property type="match status" value="1"/>
</dbReference>
<dbReference type="InterPro" id="IPR036039">
    <property type="entry name" value="Flu_matrix_M1"/>
</dbReference>
<dbReference type="InterPro" id="IPR013188">
    <property type="entry name" value="Flu_matrix_M1_C"/>
</dbReference>
<dbReference type="InterPro" id="IPR001561">
    <property type="entry name" value="Flu_matrix_M1_N"/>
</dbReference>
<dbReference type="InterPro" id="IPR015423">
    <property type="entry name" value="Flu_matrix_M1_N_sub1"/>
</dbReference>
<dbReference type="InterPro" id="IPR015799">
    <property type="entry name" value="Flu_matrix_M1_N_sub2"/>
</dbReference>
<dbReference type="InterPro" id="IPR037533">
    <property type="entry name" value="INFV_M1"/>
</dbReference>
<dbReference type="Pfam" id="PF00598">
    <property type="entry name" value="Flu_M1"/>
    <property type="match status" value="1"/>
</dbReference>
<dbReference type="Pfam" id="PF08289">
    <property type="entry name" value="Flu_M1_C"/>
    <property type="match status" value="1"/>
</dbReference>
<dbReference type="SMART" id="SM00759">
    <property type="entry name" value="Flu_M1_C"/>
    <property type="match status" value="1"/>
</dbReference>
<dbReference type="SUPFAM" id="SSF48145">
    <property type="entry name" value="Influenza virus matrix protein M1"/>
    <property type="match status" value="1"/>
</dbReference>
<keyword id="KW-0025">Alternative splicing</keyword>
<keyword id="KW-1048">Host nucleus</keyword>
<keyword id="KW-0472">Membrane</keyword>
<keyword id="KW-0694">RNA-binding</keyword>
<keyword id="KW-0468">Viral matrix protein</keyword>
<keyword id="KW-0946">Virion</keyword>
<organismHost>
    <name type="scientific">Aves</name>
    <dbReference type="NCBI Taxonomy" id="8782"/>
</organismHost>
<organismHost>
    <name type="scientific">Felis catus</name>
    <name type="common">Cat</name>
    <name type="synonym">Felis silvestris catus</name>
    <dbReference type="NCBI Taxonomy" id="9685"/>
</organismHost>
<organismHost>
    <name type="scientific">Homo sapiens</name>
    <name type="common">Human</name>
    <dbReference type="NCBI Taxonomy" id="9606"/>
</organismHost>
<organismHost>
    <name type="scientific">Panthera pardus</name>
    <name type="common">Leopard</name>
    <name type="synonym">Felis pardus</name>
    <dbReference type="NCBI Taxonomy" id="9691"/>
</organismHost>
<organismHost>
    <name type="scientific">Panthera tigris</name>
    <name type="common">Tiger</name>
    <dbReference type="NCBI Taxonomy" id="9694"/>
</organismHost>
<organismHost>
    <name type="scientific">Sus scrofa</name>
    <name type="common">Pig</name>
    <dbReference type="NCBI Taxonomy" id="9823"/>
</organismHost>
<feature type="chain" id="PRO_0000078861" description="Matrix protein 1">
    <location>
        <begin position="1"/>
        <end position="252"/>
    </location>
</feature>
<feature type="region of interest" description="Membrane-binding" evidence="1">
    <location>
        <begin position="1"/>
        <end position="164"/>
    </location>
</feature>
<feature type="region of interest" description="RNP-binding" evidence="1">
    <location>
        <begin position="165"/>
        <end position="252"/>
    </location>
</feature>
<feature type="short sequence motif" description="Nuclear localization signal" evidence="1">
    <location>
        <begin position="101"/>
        <end position="105"/>
    </location>
</feature>
<gene>
    <name evidence="1" type="primary">M</name>
</gene>